<comment type="function">
    <text evidence="1 2 3">DNA-dependent ATPase and 3'-5' DNA helicase that may be involved in repair of stalled replication forks. Unwinds the lagging strand from forked DNA structures in a 3'-5' direction. PCNA, the DNA polymerase sliding clamp subunit, stimulates the helicase activity, and may alter substrate specificity. Unwinds branched DNA (Holliday junctions) in an ATP-dependent fashion; ss- and dsDNA stimulate ATPase to the greatest extent, although it preferentially binds DNA with a single-stranded region. Processes a RecA-mediated recombination intermediate between gapped circular and homologous linear dsDNA.</text>
</comment>
<comment type="catalytic activity">
    <reaction evidence="1 3">
        <text>Couples ATP hydrolysis with the unwinding of duplex DNA by translocating in the 3'-5' direction.</text>
        <dbReference type="EC" id="5.6.2.4"/>
    </reaction>
</comment>
<comment type="catalytic activity">
    <reaction evidence="1 3">
        <text>ATP + H2O = ADP + phosphate + H(+)</text>
        <dbReference type="Rhea" id="RHEA:13065"/>
        <dbReference type="ChEBI" id="CHEBI:15377"/>
        <dbReference type="ChEBI" id="CHEBI:15378"/>
        <dbReference type="ChEBI" id="CHEBI:30616"/>
        <dbReference type="ChEBI" id="CHEBI:43474"/>
        <dbReference type="ChEBI" id="CHEBI:456216"/>
        <dbReference type="EC" id="5.6.2.4"/>
    </reaction>
</comment>
<comment type="cofactor">
    <cofactor evidence="2">
        <name>Mg(2+)</name>
        <dbReference type="ChEBI" id="CHEBI:18420"/>
    </cofactor>
    <cofactor evidence="2">
        <name>Zn(2+)</name>
        <dbReference type="ChEBI" id="CHEBI:29105"/>
    </cofactor>
    <text evidence="2">Divalent cations, Mg(2+) and Zn(2+) are best.</text>
</comment>
<comment type="subunit">
    <text evidence="1 2 3">Monomer (By similarity) (PubMed:15677450). Interacts with PCNA (PubMed:16436047).</text>
</comment>
<comment type="induction">
    <text evidence="2">Constitutively expressed (at protein level).</text>
</comment>
<comment type="similarity">
    <text evidence="1">Belongs to the helicase family. Hel308 subfamily.</text>
</comment>
<proteinExistence type="evidence at protein level"/>
<gene>
    <name evidence="1" type="primary">hel308</name>
    <name evidence="5" type="synonym">hjm</name>
    <name type="ordered locus">PF0677</name>
</gene>
<keyword id="KW-0002">3D-structure</keyword>
<keyword id="KW-0067">ATP-binding</keyword>
<keyword id="KW-0227">DNA damage</keyword>
<keyword id="KW-0234">DNA repair</keyword>
<keyword id="KW-0238">DNA-binding</keyword>
<keyword id="KW-0347">Helicase</keyword>
<keyword id="KW-0378">Hydrolase</keyword>
<keyword id="KW-0413">Isomerase</keyword>
<keyword id="KW-0547">Nucleotide-binding</keyword>
<keyword id="KW-1185">Reference proteome</keyword>
<evidence type="ECO:0000255" key="1">
    <source>
        <dbReference type="HAMAP-Rule" id="MF_00442"/>
    </source>
</evidence>
<evidence type="ECO:0000269" key="2">
    <source>
    </source>
</evidence>
<evidence type="ECO:0000269" key="3">
    <source>
    </source>
</evidence>
<evidence type="ECO:0000269" key="4">
    <source>
    </source>
</evidence>
<evidence type="ECO:0000303" key="5">
    <source>
    </source>
</evidence>
<evidence type="ECO:0000312" key="6">
    <source>
        <dbReference type="PDB" id="2ZJ2"/>
    </source>
</evidence>
<evidence type="ECO:0000312" key="7">
    <source>
        <dbReference type="PDB" id="2ZJ5"/>
    </source>
</evidence>
<evidence type="ECO:0000312" key="8">
    <source>
        <dbReference type="PDB" id="2ZJ8"/>
    </source>
</evidence>
<evidence type="ECO:0000312" key="9">
    <source>
        <dbReference type="PDB" id="2ZJA"/>
    </source>
</evidence>
<evidence type="ECO:0007829" key="10">
    <source>
        <dbReference type="PDB" id="2ZJ2"/>
    </source>
</evidence>
<evidence type="ECO:0007829" key="11">
    <source>
        <dbReference type="PDB" id="2ZJ8"/>
    </source>
</evidence>
<evidence type="ECO:0007829" key="12">
    <source>
        <dbReference type="PDB" id="2ZJA"/>
    </source>
</evidence>
<protein>
    <recommendedName>
        <fullName evidence="1">ATP-dependent DNA helicase Hel308</fullName>
        <ecNumber evidence="1 3">5.6.2.4</ecNumber>
    </recommendedName>
    <alternativeName>
        <fullName>ATP-dependent Holliday junction unwindase Hjm</fullName>
    </alternativeName>
    <alternativeName>
        <fullName evidence="1">DNA 3'-5' helicase Hel308</fullName>
    </alternativeName>
    <alternativeName>
        <fullName evidence="5">Holliday junction migration DNA helicase</fullName>
    </alternativeName>
</protein>
<organism>
    <name type="scientific">Pyrococcus furiosus (strain ATCC 43587 / DSM 3638 / JCM 8422 / Vc1)</name>
    <dbReference type="NCBI Taxonomy" id="186497"/>
    <lineage>
        <taxon>Archaea</taxon>
        <taxon>Methanobacteriati</taxon>
        <taxon>Methanobacteriota</taxon>
        <taxon>Thermococci</taxon>
        <taxon>Thermococcales</taxon>
        <taxon>Thermococcaceae</taxon>
        <taxon>Pyrococcus</taxon>
    </lineage>
</organism>
<sequence length="720" mass="82631">MRVDELRVDERIKSTLKERGIESFYPPQAEALKSGILEGKNALISIPTASGKTLIAEIAMVHRILTQGGKAVYIVPLKALAEEKFQEFQDWEKIGLRVAMATGDYDSKDEWLGKYDIIIATAEKFDSLLRHGSSWIKDVKILVADEIHLIGSRDRGATLEVILAHMLGKAQIIGLSATIGNPEELAEWLNAELIVSDWRPVKLRRGVFYQGFVTWEDGSIDRFSSWEELVYDAIRKKKGALIFVNMRRKAERVALELSKKVKSLLTKPEIRALNELADSLEENPTNEKLAKAIRGGVAFHHAGLGRDERVLVEENFRKGIIKAVVATPTLSAGINTPAFRVIIRDIWRYSDFGMERIPIIEVHQMLGRAGRPKYDEVGEGIIVSTSDDPREVMNHYIFGKPEKLFSQLSNESNLRSQVLALIATFGYSTVEEILKFISNTFYAYQRKDTYSLEEKIRNILYFLLENEFIEISLEDKIRPLSLGIRTAKLYIDPYTAKMFKDKMEEVVKDPNPIGIFHLISLTPDITPFNYSKREFERLEEEYYEFKDRLYFDDPYISGYDPYLERKFFRAFKTALVLLAWINEVPEGEIVEKYSVEPGDIYRIVETAEWLVYSLKEIAKVLGAYEIVDYLETLRVRVKYGIREELIPLMQLPLVGRRRARALYNSGFRSIEDISQARPEELLKIEGIGVKTVEAIFKFLGKNVKISEKPRKSTLDYFLKS</sequence>
<dbReference type="EC" id="5.6.2.4" evidence="1 3"/>
<dbReference type="EMBL" id="AB016521">
    <property type="protein sequence ID" value="BAA32016.1"/>
    <property type="molecule type" value="Genomic_DNA"/>
</dbReference>
<dbReference type="EMBL" id="AE009950">
    <property type="protein sequence ID" value="AAL80801.1"/>
    <property type="molecule type" value="Genomic_DNA"/>
</dbReference>
<dbReference type="PIR" id="T43854">
    <property type="entry name" value="T43854"/>
</dbReference>
<dbReference type="RefSeq" id="WP_011011799.1">
    <property type="nucleotide sequence ID" value="NZ_CP023154.1"/>
</dbReference>
<dbReference type="PDB" id="2ZJ2">
    <property type="method" value="X-ray"/>
    <property type="resolution" value="2.40 A"/>
    <property type="chains" value="A=1-720"/>
</dbReference>
<dbReference type="PDB" id="2ZJ5">
    <property type="method" value="X-ray"/>
    <property type="resolution" value="2.40 A"/>
    <property type="chains" value="A=1-720"/>
</dbReference>
<dbReference type="PDB" id="2ZJ8">
    <property type="method" value="X-ray"/>
    <property type="resolution" value="2.00 A"/>
    <property type="chains" value="A=1-720"/>
</dbReference>
<dbReference type="PDB" id="2ZJA">
    <property type="method" value="X-ray"/>
    <property type="resolution" value="2.70 A"/>
    <property type="chains" value="A=1-720"/>
</dbReference>
<dbReference type="PDBsum" id="2ZJ2"/>
<dbReference type="PDBsum" id="2ZJ5"/>
<dbReference type="PDBsum" id="2ZJ8"/>
<dbReference type="PDBsum" id="2ZJA"/>
<dbReference type="SMR" id="O73946"/>
<dbReference type="STRING" id="186497.PF0677"/>
<dbReference type="PaxDb" id="186497-PF0677"/>
<dbReference type="KEGG" id="pfu:PF0677"/>
<dbReference type="PATRIC" id="fig|186497.12.peg.713"/>
<dbReference type="eggNOG" id="arCOG00553">
    <property type="taxonomic scope" value="Archaea"/>
</dbReference>
<dbReference type="HOGENOM" id="CLU_006553_3_0_2"/>
<dbReference type="OrthoDB" id="371946at2157"/>
<dbReference type="PhylomeDB" id="O73946"/>
<dbReference type="BRENDA" id="3.6.4.12">
    <property type="organism ID" value="5243"/>
</dbReference>
<dbReference type="EvolutionaryTrace" id="O73946"/>
<dbReference type="Proteomes" id="UP000001013">
    <property type="component" value="Chromosome"/>
</dbReference>
<dbReference type="GO" id="GO:0043138">
    <property type="term" value="F:3'-5' DNA helicase activity"/>
    <property type="evidence" value="ECO:0000314"/>
    <property type="project" value="UniProtKB"/>
</dbReference>
<dbReference type="GO" id="GO:0005524">
    <property type="term" value="F:ATP binding"/>
    <property type="evidence" value="ECO:0007669"/>
    <property type="project" value="UniProtKB-UniRule"/>
</dbReference>
<dbReference type="GO" id="GO:0016887">
    <property type="term" value="F:ATP hydrolysis activity"/>
    <property type="evidence" value="ECO:0007669"/>
    <property type="project" value="RHEA"/>
</dbReference>
<dbReference type="GO" id="GO:0003677">
    <property type="term" value="F:DNA binding"/>
    <property type="evidence" value="ECO:0007669"/>
    <property type="project" value="UniProtKB-UniRule"/>
</dbReference>
<dbReference type="GO" id="GO:0006281">
    <property type="term" value="P:DNA repair"/>
    <property type="evidence" value="ECO:0007669"/>
    <property type="project" value="UniProtKB-UniRule"/>
</dbReference>
<dbReference type="CDD" id="cd18028">
    <property type="entry name" value="DEXHc_archSki2"/>
    <property type="match status" value="1"/>
</dbReference>
<dbReference type="CDD" id="cd18795">
    <property type="entry name" value="SF2_C_Ski2"/>
    <property type="match status" value="1"/>
</dbReference>
<dbReference type="Gene3D" id="1.10.3380.30">
    <property type="match status" value="1"/>
</dbReference>
<dbReference type="Gene3D" id="1.10.150.20">
    <property type="entry name" value="5' to 3' exonuclease, C-terminal subdomain"/>
    <property type="match status" value="1"/>
</dbReference>
<dbReference type="Gene3D" id="3.40.50.300">
    <property type="entry name" value="P-loop containing nucleotide triphosphate hydrolases"/>
    <property type="match status" value="2"/>
</dbReference>
<dbReference type="HAMAP" id="MF_00442">
    <property type="entry name" value="Helicase_Hel308"/>
    <property type="match status" value="1"/>
</dbReference>
<dbReference type="InterPro" id="IPR011545">
    <property type="entry name" value="DEAD/DEAH_box_helicase_dom"/>
</dbReference>
<dbReference type="InterPro" id="IPR048772">
    <property type="entry name" value="Hel308-like_dom4"/>
</dbReference>
<dbReference type="InterPro" id="IPR050474">
    <property type="entry name" value="Hel308_SKI2-like"/>
</dbReference>
<dbReference type="InterPro" id="IPR014001">
    <property type="entry name" value="Helicase_ATP-bd"/>
</dbReference>
<dbReference type="InterPro" id="IPR001650">
    <property type="entry name" value="Helicase_C-like"/>
</dbReference>
<dbReference type="InterPro" id="IPR022965">
    <property type="entry name" value="Helicase_Hel308"/>
</dbReference>
<dbReference type="InterPro" id="IPR003583">
    <property type="entry name" value="Hlx-hairpin-Hlx_DNA-bd_motif"/>
</dbReference>
<dbReference type="InterPro" id="IPR027417">
    <property type="entry name" value="P-loop_NTPase"/>
</dbReference>
<dbReference type="InterPro" id="IPR036390">
    <property type="entry name" value="WH_DNA-bd_sf"/>
</dbReference>
<dbReference type="NCBIfam" id="NF001308">
    <property type="entry name" value="PRK00254.1"/>
    <property type="match status" value="1"/>
</dbReference>
<dbReference type="PANTHER" id="PTHR47961:SF10">
    <property type="entry name" value="ATP-DEPENDENT DNA HELICASE HEL308"/>
    <property type="match status" value="1"/>
</dbReference>
<dbReference type="PANTHER" id="PTHR47961">
    <property type="entry name" value="DNA POLYMERASE THETA, PUTATIVE (AFU_ORTHOLOGUE AFUA_1G05260)-RELATED"/>
    <property type="match status" value="1"/>
</dbReference>
<dbReference type="Pfam" id="PF00270">
    <property type="entry name" value="DEAD"/>
    <property type="match status" value="1"/>
</dbReference>
<dbReference type="Pfam" id="PF00271">
    <property type="entry name" value="Helicase_C"/>
    <property type="match status" value="1"/>
</dbReference>
<dbReference type="Pfam" id="PF21280">
    <property type="entry name" value="Helicase_dom4_arc"/>
    <property type="match status" value="1"/>
</dbReference>
<dbReference type="Pfam" id="PF14520">
    <property type="entry name" value="HHH_5"/>
    <property type="match status" value="1"/>
</dbReference>
<dbReference type="SMART" id="SM00487">
    <property type="entry name" value="DEXDc"/>
    <property type="match status" value="1"/>
</dbReference>
<dbReference type="SMART" id="SM00490">
    <property type="entry name" value="HELICc"/>
    <property type="match status" value="1"/>
</dbReference>
<dbReference type="SMART" id="SM00278">
    <property type="entry name" value="HhH1"/>
    <property type="match status" value="2"/>
</dbReference>
<dbReference type="SUPFAM" id="SSF52540">
    <property type="entry name" value="P-loop containing nucleoside triphosphate hydrolases"/>
    <property type="match status" value="2"/>
</dbReference>
<dbReference type="SUPFAM" id="SSF158702">
    <property type="entry name" value="Sec63 N-terminal domain-like"/>
    <property type="match status" value="1"/>
</dbReference>
<dbReference type="SUPFAM" id="SSF46785">
    <property type="entry name" value="Winged helix' DNA-binding domain"/>
    <property type="match status" value="1"/>
</dbReference>
<dbReference type="PROSITE" id="PS51192">
    <property type="entry name" value="HELICASE_ATP_BIND_1"/>
    <property type="match status" value="1"/>
</dbReference>
<dbReference type="PROSITE" id="PS51194">
    <property type="entry name" value="HELICASE_CTER"/>
    <property type="match status" value="1"/>
</dbReference>
<feature type="chain" id="PRO_0000102110" description="ATP-dependent DNA helicase Hel308">
    <location>
        <begin position="1"/>
        <end position="720"/>
    </location>
</feature>
<feature type="domain" description="Helicase ATP-binding" evidence="1">
    <location>
        <begin position="33"/>
        <end position="197"/>
    </location>
</feature>
<feature type="domain" description="Helicase C-terminal" evidence="1">
    <location>
        <begin position="229"/>
        <end position="422"/>
    </location>
</feature>
<feature type="short sequence motif" description="DEAH box" evidence="1">
    <location>
        <begin position="145"/>
        <end position="148"/>
    </location>
</feature>
<feature type="binding site" evidence="7 9">
    <location>
        <position position="23"/>
    </location>
    <ligand>
        <name>ATP</name>
        <dbReference type="ChEBI" id="CHEBI:30616"/>
    </ligand>
</feature>
<feature type="binding site" evidence="7 9">
    <location>
        <position position="28"/>
    </location>
    <ligand>
        <name>ATP</name>
        <dbReference type="ChEBI" id="CHEBI:30616"/>
    </ligand>
</feature>
<feature type="binding site" evidence="4 9">
    <location>
        <begin position="46"/>
        <end position="53"/>
    </location>
    <ligand>
        <name>ATP</name>
        <dbReference type="ChEBI" id="CHEBI:30616"/>
    </ligand>
</feature>
<feature type="mutagenesis site" description="No ATPase activity." evidence="3">
    <original>K</original>
    <variation>A</variation>
    <location>
        <position position="52"/>
    </location>
</feature>
<feature type="mutagenesis site" description="No ATPase activity." evidence="3">
    <original>D</original>
    <variation>A</variation>
    <location>
        <position position="145"/>
    </location>
</feature>
<feature type="mutagenesis site" description="No ATPase activity." evidence="3">
    <original>E</original>
    <variation>A</variation>
    <location>
        <position position="146"/>
    </location>
</feature>
<feature type="mutagenesis site" description="No binding to PCNA." evidence="3">
    <location>
        <begin position="701"/>
        <end position="720"/>
    </location>
</feature>
<feature type="helix" evidence="11">
    <location>
        <begin position="3"/>
        <end position="5"/>
    </location>
</feature>
<feature type="helix" evidence="11">
    <location>
        <begin position="10"/>
        <end position="18"/>
    </location>
</feature>
<feature type="helix" evidence="11">
    <location>
        <begin position="26"/>
        <end position="32"/>
    </location>
</feature>
<feature type="turn" evidence="11">
    <location>
        <begin position="33"/>
        <end position="35"/>
    </location>
</feature>
<feature type="helix" evidence="11">
    <location>
        <begin position="36"/>
        <end position="38"/>
    </location>
</feature>
<feature type="strand" evidence="11">
    <location>
        <begin position="41"/>
        <end position="45"/>
    </location>
</feature>
<feature type="helix" evidence="11">
    <location>
        <begin position="48"/>
        <end position="50"/>
    </location>
</feature>
<feature type="helix" evidence="11">
    <location>
        <begin position="52"/>
        <end position="67"/>
    </location>
</feature>
<feature type="strand" evidence="11">
    <location>
        <begin position="69"/>
        <end position="74"/>
    </location>
</feature>
<feature type="helix" evidence="11">
    <location>
        <begin position="78"/>
        <end position="80"/>
    </location>
</feature>
<feature type="helix" evidence="11">
    <location>
        <begin position="81"/>
        <end position="87"/>
    </location>
</feature>
<feature type="helix" evidence="11">
    <location>
        <begin position="89"/>
        <end position="94"/>
    </location>
</feature>
<feature type="strand" evidence="11">
    <location>
        <begin position="98"/>
        <end position="101"/>
    </location>
</feature>
<feature type="helix" evidence="11">
    <location>
        <begin position="110"/>
        <end position="114"/>
    </location>
</feature>
<feature type="strand" evidence="11">
    <location>
        <begin position="116"/>
        <end position="120"/>
    </location>
</feature>
<feature type="helix" evidence="11">
    <location>
        <begin position="122"/>
        <end position="131"/>
    </location>
</feature>
<feature type="helix" evidence="11">
    <location>
        <begin position="136"/>
        <end position="138"/>
    </location>
</feature>
<feature type="strand" evidence="11">
    <location>
        <begin position="139"/>
        <end position="145"/>
    </location>
</feature>
<feature type="helix" evidence="11">
    <location>
        <begin position="147"/>
        <end position="151"/>
    </location>
</feature>
<feature type="turn" evidence="11">
    <location>
        <begin position="153"/>
        <end position="155"/>
    </location>
</feature>
<feature type="helix" evidence="11">
    <location>
        <begin position="156"/>
        <end position="166"/>
    </location>
</feature>
<feature type="strand" evidence="11">
    <location>
        <begin position="170"/>
        <end position="176"/>
    </location>
</feature>
<feature type="helix" evidence="11">
    <location>
        <begin position="182"/>
        <end position="188"/>
    </location>
</feature>
<feature type="strand" evidence="11">
    <location>
        <begin position="191"/>
        <end position="195"/>
    </location>
</feature>
<feature type="strand" evidence="11">
    <location>
        <begin position="200"/>
        <end position="209"/>
    </location>
</feature>
<feature type="strand" evidence="11">
    <location>
        <begin position="212"/>
        <end position="215"/>
    </location>
</feature>
<feature type="strand" evidence="11">
    <location>
        <begin position="220"/>
        <end position="222"/>
    </location>
</feature>
<feature type="helix" evidence="11">
    <location>
        <begin position="228"/>
        <end position="235"/>
    </location>
</feature>
<feature type="strand" evidence="11">
    <location>
        <begin position="240"/>
        <end position="243"/>
    </location>
</feature>
<feature type="helix" evidence="11">
    <location>
        <begin position="247"/>
        <end position="261"/>
    </location>
</feature>
<feature type="helix" evidence="11">
    <location>
        <begin position="262"/>
        <end position="264"/>
    </location>
</feature>
<feature type="helix" evidence="11">
    <location>
        <begin position="267"/>
        <end position="278"/>
    </location>
</feature>
<feature type="helix" evidence="11">
    <location>
        <begin position="284"/>
        <end position="293"/>
    </location>
</feature>
<feature type="turn" evidence="11">
    <location>
        <begin position="294"/>
        <end position="296"/>
    </location>
</feature>
<feature type="strand" evidence="11">
    <location>
        <begin position="297"/>
        <end position="300"/>
    </location>
</feature>
<feature type="helix" evidence="11">
    <location>
        <begin position="306"/>
        <end position="317"/>
    </location>
</feature>
<feature type="strand" evidence="11">
    <location>
        <begin position="323"/>
        <end position="326"/>
    </location>
</feature>
<feature type="strand" evidence="12">
    <location>
        <begin position="328"/>
        <end position="330"/>
    </location>
</feature>
<feature type="helix" evidence="11">
    <location>
        <begin position="331"/>
        <end position="333"/>
    </location>
</feature>
<feature type="strand" evidence="11">
    <location>
        <begin position="338"/>
        <end position="343"/>
    </location>
</feature>
<feature type="strand" evidence="11">
    <location>
        <begin position="346"/>
        <end position="348"/>
    </location>
</feature>
<feature type="strand" evidence="11">
    <location>
        <begin position="351"/>
        <end position="353"/>
    </location>
</feature>
<feature type="helix" evidence="11">
    <location>
        <begin position="359"/>
        <end position="366"/>
    </location>
</feature>
<feature type="turn" evidence="11">
    <location>
        <begin position="372"/>
        <end position="374"/>
    </location>
</feature>
<feature type="strand" evidence="11">
    <location>
        <begin position="376"/>
        <end position="383"/>
    </location>
</feature>
<feature type="strand" evidence="11">
    <location>
        <begin position="385"/>
        <end position="387"/>
    </location>
</feature>
<feature type="helix" evidence="11">
    <location>
        <begin position="389"/>
        <end position="396"/>
    </location>
</feature>
<feature type="helix" evidence="11">
    <location>
        <begin position="411"/>
        <end position="424"/>
    </location>
</feature>
<feature type="helix" evidence="11">
    <location>
        <begin position="430"/>
        <end position="438"/>
    </location>
</feature>
<feature type="helix" evidence="11">
    <location>
        <begin position="441"/>
        <end position="445"/>
    </location>
</feature>
<feature type="helix" evidence="11">
    <location>
        <begin position="450"/>
        <end position="465"/>
    </location>
</feature>
<feature type="strand" evidence="11">
    <location>
        <begin position="468"/>
        <end position="471"/>
    </location>
</feature>
<feature type="strand" evidence="11">
    <location>
        <begin position="477"/>
        <end position="479"/>
    </location>
</feature>
<feature type="helix" evidence="11">
    <location>
        <begin position="481"/>
        <end position="489"/>
    </location>
</feature>
<feature type="helix" evidence="11">
    <location>
        <begin position="493"/>
        <end position="508"/>
    </location>
</feature>
<feature type="helix" evidence="11">
    <location>
        <begin position="512"/>
        <end position="520"/>
    </location>
</feature>
<feature type="helix" evidence="11">
    <location>
        <begin position="532"/>
        <end position="534"/>
    </location>
</feature>
<feature type="helix" evidence="11">
    <location>
        <begin position="535"/>
        <end position="545"/>
    </location>
</feature>
<feature type="helix" evidence="11">
    <location>
        <begin position="546"/>
        <end position="548"/>
    </location>
</feature>
<feature type="turn" evidence="12">
    <location>
        <begin position="554"/>
        <end position="557"/>
    </location>
</feature>
<feature type="helix" evidence="11">
    <location>
        <begin position="561"/>
        <end position="581"/>
    </location>
</feature>
<feature type="helix" evidence="11">
    <location>
        <begin position="586"/>
        <end position="593"/>
    </location>
</feature>
<feature type="helix" evidence="11">
    <location>
        <begin position="597"/>
        <end position="621"/>
    </location>
</feature>
<feature type="helix" evidence="11">
    <location>
        <begin position="624"/>
        <end position="626"/>
    </location>
</feature>
<feature type="helix" evidence="11">
    <location>
        <begin position="627"/>
        <end position="639"/>
    </location>
</feature>
<feature type="helix" evidence="11">
    <location>
        <begin position="643"/>
        <end position="648"/>
    </location>
</feature>
<feature type="strand" evidence="10">
    <location>
        <begin position="651"/>
        <end position="653"/>
    </location>
</feature>
<feature type="helix" evidence="11">
    <location>
        <begin position="656"/>
        <end position="663"/>
    </location>
</feature>
<feature type="turn" evidence="11">
    <location>
        <begin position="664"/>
        <end position="666"/>
    </location>
</feature>
<feature type="helix" evidence="11">
    <location>
        <begin position="670"/>
        <end position="674"/>
    </location>
</feature>
<feature type="helix" evidence="11">
    <location>
        <begin position="678"/>
        <end position="682"/>
    </location>
</feature>
<feature type="helix" evidence="11">
    <location>
        <begin position="689"/>
        <end position="699"/>
    </location>
</feature>
<name>HELS_PYRFU</name>
<accession>O73946</accession>
<reference key="1">
    <citation type="submission" date="1998-07" db="EMBL/GenBank/DDBJ databases">
        <title>Pfu helicase locus.</title>
        <authorList>
            <person name="Kanai A."/>
            <person name="Oida H."/>
            <person name="Yabe T."/>
            <person name="Hihara S."/>
            <person name="Doi H."/>
        </authorList>
    </citation>
    <scope>NUCLEOTIDE SEQUENCE [GENOMIC DNA]</scope>
    <source>
        <strain>ATCC 43587 / DSM 3638 / JCM 8422 / Vc1</strain>
    </source>
</reference>
<reference key="2">
    <citation type="journal article" date="1999" name="Genetics">
        <title>Divergence of the hyperthermophilic archaea Pyrococcus furiosus and P. horikoshii inferred from complete genomic sequences.</title>
        <authorList>
            <person name="Maeder D.L."/>
            <person name="Weiss R.B."/>
            <person name="Dunn D.M."/>
            <person name="Cherry J.L."/>
            <person name="Gonzalez J.M."/>
            <person name="DiRuggiero J."/>
            <person name="Robb F.T."/>
        </authorList>
    </citation>
    <scope>NUCLEOTIDE SEQUENCE [LARGE SCALE GENOMIC DNA]</scope>
    <source>
        <strain>ATCC 43587 / DSM 3638 / JCM 8422 / Vc1</strain>
    </source>
</reference>
<reference key="3">
    <citation type="journal article" date="2005" name="J. Biol. Chem.">
        <title>Identification of a novel helicase activity unwinding branched DNAs from the hyperthermophilic archaeon, Pyrococcus furiosus.</title>
        <authorList>
            <person name="Fujikane R."/>
            <person name="Komori K."/>
            <person name="Shinagawa H."/>
            <person name="Ishino Y."/>
        </authorList>
    </citation>
    <scope>IDENTIFICATION</scope>
    <scope>FUNCTION</scope>
    <scope>ATP-DEPENDENCE</scope>
    <scope>COFACTOR</scope>
    <scope>SUBUNIT</scope>
    <scope>INDUCTION</scope>
    <source>
        <strain>ATCC 43587 / DSM 3638 / JCM 8422 / Vc1</strain>
    </source>
</reference>
<reference key="4">
    <citation type="journal article" date="2006" name="Genes Cells">
        <title>The archaeal Hjm helicase has recQ-like functions, and may be involved in repair of stalled replication fork.</title>
        <authorList>
            <person name="Fujikane R."/>
            <person name="Shinagawa H."/>
            <person name="Ishino Y."/>
        </authorList>
    </citation>
    <scope>FUNCTION AS AN ATPASE</scope>
    <scope>FUNCTION AS A HELICASE</scope>
    <scope>CATALYTIC ACTIVITY</scope>
    <scope>INTERACTION WITH PCNA</scope>
    <scope>SUBUNIT</scope>
    <scope>DNA-BINDING</scope>
    <scope>MUTAGENESIS OF LYS-52; ASP-145; GLU-146 AND 701-LYS--SER-720</scope>
</reference>
<reference evidence="6 7 8 9" key="5">
    <citation type="journal article" date="2009" name="BMC Struct. Biol.">
        <title>Atomic structures and functional implications of the archaeal RecQ-like helicase Hjm.</title>
        <authorList>
            <person name="Oyama T."/>
            <person name="Oka H."/>
            <person name="Mayanagi K."/>
            <person name="Shirai T."/>
            <person name="Matoba K."/>
            <person name="Fujikane R."/>
            <person name="Ishino Y."/>
            <person name="Morikawa K."/>
        </authorList>
    </citation>
    <scope>X-RAY CRYSTALLOGRAPHY (2.0 ANGSTROMS) WITH AND WITHOUT ATP</scope>
</reference>